<organism>
    <name type="scientific">Shewanella oneidensis (strain ATCC 700550 / JCM 31522 / CIP 106686 / LMG 19005 / NCIMB 14063 / MR-1)</name>
    <dbReference type="NCBI Taxonomy" id="211586"/>
    <lineage>
        <taxon>Bacteria</taxon>
        <taxon>Pseudomonadati</taxon>
        <taxon>Pseudomonadota</taxon>
        <taxon>Gammaproteobacteria</taxon>
        <taxon>Alteromonadales</taxon>
        <taxon>Shewanellaceae</taxon>
        <taxon>Shewanella</taxon>
    </lineage>
</organism>
<protein>
    <recommendedName>
        <fullName>mRNA nuclease HepT</fullName>
        <ecNumber evidence="3">3.1.-.-</ecNumber>
    </recommendedName>
    <alternativeName>
        <fullName evidence="6">Toxin HepT</fullName>
    </alternativeName>
</protein>
<comment type="function">
    <text evidence="2 3 4">Toxic component of a type VII toxin-antitoxin (TA) system. A bacteriostatic toxin; upon overexpression in situ or in E.coli inhibits cell growth. Cells swell slightly. Neutralized by cognate antitoxin MntA (PubMed:26112399, PubMed:29555683, PubMed:33045733). Cleaves mRNA in a probably endonucleolytic manner; has no activity on rRNA, tRNA, ssDNA or dsDNA. The TA system confers plasmid stability in E.coli (PubMed:29555683). Neutralization is mostly due to tri-AMPylation by MntA (PubMed:33045733).</text>
</comment>
<comment type="subunit">
    <text evidence="2 3">Forms a complex with cognate antitoxin MntA (PubMed:26112399). Forms a heterooctamer with cognate antitoxin MntA with stoichiometry HepT(6):MntA(2). Two HepT molecules dimerize to form a cleft with 2 Rx4-6H active site motifs in close proximity that probably bind substrate; in the heterooctamer 3 HepT dimers form (PubMed:29555683).</text>
</comment>
<comment type="induction">
    <text evidence="2">Expressed during exponential growth, part of the mntA-hepT operon. Under control of MntA.</text>
</comment>
<comment type="PTM">
    <text evidence="4">Tri-AMPylated by cognate antitoxin MntA on Tyr-104; this rotates the residue nearly 180 degrees. Modified protein has much less RNase activity.</text>
</comment>
<comment type="mass spectrometry" mass="16191.46" method="Electrospray" evidence="4">
    <text>6-His tagged, no AMPylation, probably in situ.</text>
</comment>
<comment type="mass spectrometry" mass="17122.06" method="Electrospray" evidence="4">
    <text>6-His tagged, modifed by 3 AMP, probably in situ.</text>
</comment>
<comment type="disruption phenotype">
    <text evidence="2">When mntA-hepT is deleted, has a sight reduction in swimming motility. No effect when just this gene is deleted.</text>
</comment>
<comment type="similarity">
    <text evidence="7">Belongs to the HepT RNase toxin family.</text>
</comment>
<reference key="1">
    <citation type="journal article" date="2002" name="Nat. Biotechnol.">
        <title>Genome sequence of the dissimilatory metal ion-reducing bacterium Shewanella oneidensis.</title>
        <authorList>
            <person name="Heidelberg J.F."/>
            <person name="Paulsen I.T."/>
            <person name="Nelson K.E."/>
            <person name="Gaidos E.J."/>
            <person name="Nelson W.C."/>
            <person name="Read T.D."/>
            <person name="Eisen J.A."/>
            <person name="Seshadri R."/>
            <person name="Ward N.L."/>
            <person name="Methe B.A."/>
            <person name="Clayton R.A."/>
            <person name="Meyer T."/>
            <person name="Tsapin A."/>
            <person name="Scott J."/>
            <person name="Beanan M.J."/>
            <person name="Brinkac L.M."/>
            <person name="Daugherty S.C."/>
            <person name="DeBoy R.T."/>
            <person name="Dodson R.J."/>
            <person name="Durkin A.S."/>
            <person name="Haft D.H."/>
            <person name="Kolonay J.F."/>
            <person name="Madupu R."/>
            <person name="Peterson J.D."/>
            <person name="Umayam L.A."/>
            <person name="White O."/>
            <person name="Wolf A.M."/>
            <person name="Vamathevan J.J."/>
            <person name="Weidman J.F."/>
            <person name="Impraim M."/>
            <person name="Lee K."/>
            <person name="Berry K.J."/>
            <person name="Lee C."/>
            <person name="Mueller J."/>
            <person name="Khouri H.M."/>
            <person name="Gill J."/>
            <person name="Utterback T.R."/>
            <person name="McDonald L.A."/>
            <person name="Feldblyum T.V."/>
            <person name="Smith H.O."/>
            <person name="Venter J.C."/>
            <person name="Nealson K.H."/>
            <person name="Fraser C.M."/>
        </authorList>
    </citation>
    <scope>NUCLEOTIDE SEQUENCE [LARGE SCALE GENOMIC DNA]</scope>
    <source>
        <strain>ATCC 700550 / JCM 31522 / CIP 106686 / LMG 19005 / NCIMB 14063 / MR-1</strain>
    </source>
</reference>
<reference key="2">
    <citation type="journal article" date="2015" name="Microb. Biotechnol.">
        <title>Identification and characterization of a HEPN-MNT family type II toxin-antitoxin in Shewanella oneidensis.</title>
        <authorList>
            <person name="Yao J."/>
            <person name="Guo Y."/>
            <person name="Zeng Z."/>
            <person name="Liu X."/>
            <person name="Shi F."/>
            <person name="Wang X."/>
        </authorList>
    </citation>
    <scope>FUNCTION AS A TOXIN</scope>
    <scope>SUBUNIT</scope>
    <scope>INDUCTION</scope>
    <scope>DISRUPTION PHENOTYPE</scope>
    <scope>MUTAGENESIS OF CYS-15; HIS-56; ARG-70; VAL-94; ARG-97; ASN-98; HIS-102; TYR-104; LEU-107 AND HIS-118</scope>
    <source>
        <strain>ATCC 700550 / JCM 31522 / CIP 106686 / LMG 19005 / NCIMB 14063 / MR-1</strain>
    </source>
</reference>
<reference evidence="8" key="3">
    <citation type="journal article" date="2018" name="J. Biol. Chem.">
        <title>Structure-function analyses reveal the molecular architecture and neutralization mechanism of a bacterial HEPN-MNT toxin-antitoxin system.</title>
        <authorList>
            <person name="Jia X."/>
            <person name="Yao J."/>
            <person name="Gao Z."/>
            <person name="Liu G."/>
            <person name="Dong Y.H."/>
            <person name="Wang X."/>
            <person name="Zhang H."/>
        </authorList>
    </citation>
    <scope>X-RAY CRYSTALLOGRAPHY (3.00 ANGSTROMS) IN COMPLEX WITH MNTA</scope>
    <scope>FUNCTION AS A TOXIN</scope>
    <scope>FUNCTION AS AN RNASE</scope>
    <scope>SUBUNIT</scope>
    <source>
        <strain>ATCC 700550 / JCM 31522 / CIP 106686 / LMG 19005 / NCIMB 14063 / MR-1</strain>
    </source>
</reference>
<reference evidence="9 10 11 13" key="4">
    <citation type="journal article" date="2020" name="Nucleic Acids Res.">
        <title>Novel polyadenylylation-dependent neutralization mechanism of the HEPN/MNT toxin/antitoxin system.</title>
        <authorList>
            <person name="Yao J."/>
            <person name="Zhen X."/>
            <person name="Tang K."/>
            <person name="Liu T."/>
            <person name="Xu X."/>
            <person name="Chen Z."/>
            <person name="Guo Y."/>
            <person name="Liu X."/>
            <person name="Wood T.K."/>
            <person name="Ouyang S."/>
            <person name="Wang X."/>
        </authorList>
    </citation>
    <scope>X-RAY CRYSTALLOGRAPHY (2.61 ANGSTROMS) IN COMPLEX WITH MNTA</scope>
    <scope>FUNCTION AS A TOXIN</scope>
    <scope>SUBUNIT</scope>
    <scope>MASS SPECTROMETRY</scope>
    <scope>TRI-AMPYLATION AT TYR-104</scope>
    <scope>MUTAGENESIS OF TYR-104</scope>
    <source>
        <strain>ATCC 700550 / JCM 31522 / CIP 106686 / LMG 19005 / NCIMB 14063 / MR-1</strain>
    </source>
</reference>
<reference evidence="12" key="5">
    <citation type="journal article" date="2020" name="Mol. Cell">
        <title>HEPN-MNT Toxin-Antitoxin System: The HEPN Ribonuclease Is Neutralized by OligoAMPylation.</title>
        <authorList>
            <person name="Songailiene I."/>
            <person name="Juozapaitis J."/>
            <person name="Tamulaitiene G."/>
            <person name="Ruksenaite A."/>
            <person name="Sulcius S."/>
            <person name="Sasnauskas G."/>
            <person name="Venclovas C."/>
            <person name="Siksnys V."/>
        </authorList>
    </citation>
    <scope>X-RAY CRYSTALLOGRAPHY (3.00 ANGSTROMS) IN COMPLEX WITH MNTA</scope>
    <scope>TRI-AMPYLATION AT TYR-104</scope>
    <source>
        <strain>ATCC 700550 / JCM 31522 / CIP 106686 / LMG 19005 / NCIMB 14063 / MR-1</strain>
    </source>
</reference>
<gene>
    <name evidence="6" type="primary">hepT</name>
    <name type="ordered locus">SO_3166</name>
</gene>
<proteinExistence type="evidence at protein level"/>
<name>HEPT_SHEON</name>
<feature type="chain" id="PRO_0000452433" description="mRNA nuclease HepT">
    <location>
        <begin position="1"/>
        <end position="133"/>
    </location>
</feature>
<feature type="short sequence motif" description="RX(4)HXY motif" evidence="2 4">
    <location>
        <begin position="97"/>
        <end position="104"/>
    </location>
</feature>
<feature type="active site" evidence="1">
    <location>
        <position position="97"/>
    </location>
</feature>
<feature type="active site" evidence="1">
    <location>
        <position position="102"/>
    </location>
</feature>
<feature type="modified residue" description="O-tri-AMP-tyrosine" evidence="4 5 10 12">
    <location>
        <position position="104"/>
    </location>
</feature>
<feature type="mutagenesis site" description="Loss of toxicity." evidence="2">
    <original>C</original>
    <variation>R</variation>
    <location>
        <position position="15"/>
    </location>
</feature>
<feature type="mutagenesis site" description="Loss of toxicity." evidence="2">
    <original>H</original>
    <variation>P</variation>
    <location>
        <position position="56"/>
    </location>
</feature>
<feature type="mutagenesis site" description="Loss of toxicity." evidence="2">
    <original>R</original>
    <variation>H</variation>
    <location>
        <position position="70"/>
    </location>
</feature>
<feature type="mutagenesis site" description="Loss of toxicity." evidence="2">
    <original>V</original>
    <variation>G</variation>
    <location>
        <position position="94"/>
    </location>
</feature>
<feature type="mutagenesis site" description="Loss of toxicity." evidence="2">
    <original>R</original>
    <variation>G</variation>
    <location>
        <position position="97"/>
    </location>
</feature>
<feature type="mutagenesis site" description="Loss of toxicity; when associated with C-104." evidence="2">
    <original>N</original>
    <variation>T</variation>
    <location>
        <position position="98"/>
    </location>
</feature>
<feature type="mutagenesis site" description="Loss of toxicity." evidence="2">
    <original>H</original>
    <variation>A</variation>
    <location>
        <position position="102"/>
    </location>
</feature>
<feature type="mutagenesis site" description="No loss of toxicity. No longer AMPylated by MntA." evidence="2 4">
    <original>Y</original>
    <variation>A</variation>
    <location>
        <position position="104"/>
    </location>
</feature>
<feature type="mutagenesis site" description="Loss of toxicity." evidence="2">
    <original>L</original>
    <variation>H</variation>
    <location>
        <position position="107"/>
    </location>
</feature>
<feature type="mutagenesis site" description="Loss of toxicity." evidence="2">
    <original>H</original>
    <variation>P</variation>
    <location>
        <position position="118"/>
    </location>
</feature>
<feature type="helix" evidence="14">
    <location>
        <begin position="3"/>
        <end position="23"/>
    </location>
</feature>
<feature type="turn" evidence="14">
    <location>
        <begin position="27"/>
        <end position="31"/>
    </location>
</feature>
<feature type="helix" evidence="14">
    <location>
        <begin position="33"/>
        <end position="60"/>
    </location>
</feature>
<feature type="helix" evidence="14">
    <location>
        <begin position="69"/>
        <end position="78"/>
    </location>
</feature>
<feature type="helix" evidence="14">
    <location>
        <begin position="84"/>
        <end position="102"/>
    </location>
</feature>
<feature type="helix" evidence="14">
    <location>
        <begin position="104"/>
        <end position="106"/>
    </location>
</feature>
<feature type="helix" evidence="14">
    <location>
        <begin position="109"/>
        <end position="118"/>
    </location>
</feature>
<feature type="helix" evidence="14">
    <location>
        <begin position="120"/>
        <end position="131"/>
    </location>
</feature>
<accession>Q8ECH6</accession>
<dbReference type="EC" id="3.1.-.-" evidence="3"/>
<dbReference type="EMBL" id="AE014299">
    <property type="protein sequence ID" value="AAN56166.1"/>
    <property type="molecule type" value="Genomic_DNA"/>
</dbReference>
<dbReference type="RefSeq" id="NP_718722.1">
    <property type="nucleotide sequence ID" value="NC_004347.2"/>
</dbReference>
<dbReference type="RefSeq" id="WP_011073053.1">
    <property type="nucleotide sequence ID" value="NC_004347.2"/>
</dbReference>
<dbReference type="PDB" id="5YEP">
    <property type="method" value="X-ray"/>
    <property type="resolution" value="3.00 A"/>
    <property type="chains" value="B/C/D=1-133"/>
</dbReference>
<dbReference type="PDB" id="6M6U">
    <property type="method" value="X-ray"/>
    <property type="resolution" value="2.35 A"/>
    <property type="chains" value="B/C/D/G/H/I=1-133"/>
</dbReference>
<dbReference type="PDB" id="6M6V">
    <property type="method" value="X-ray"/>
    <property type="resolution" value="3.08 A"/>
    <property type="chains" value="B/C/D=1-133"/>
</dbReference>
<dbReference type="PDB" id="6M6W">
    <property type="method" value="X-ray"/>
    <property type="resolution" value="2.61 A"/>
    <property type="chains" value="B/C/D/G/H/I=1-133"/>
</dbReference>
<dbReference type="PDB" id="7AER">
    <property type="method" value="X-ray"/>
    <property type="resolution" value="3.00 A"/>
    <property type="chains" value="B/C/D=1-133"/>
</dbReference>
<dbReference type="PDB" id="7BXO">
    <property type="method" value="X-ray"/>
    <property type="resolution" value="2.77 A"/>
    <property type="chains" value="B/C/D/F/G/H=1-133"/>
</dbReference>
<dbReference type="PDBsum" id="5YEP"/>
<dbReference type="PDBsum" id="6M6U"/>
<dbReference type="PDBsum" id="6M6V"/>
<dbReference type="PDBsum" id="6M6W"/>
<dbReference type="PDBsum" id="7AER"/>
<dbReference type="PDBsum" id="7BXO"/>
<dbReference type="SMR" id="Q8ECH6"/>
<dbReference type="STRING" id="211586.SO_3166"/>
<dbReference type="PaxDb" id="211586-SO_3166"/>
<dbReference type="KEGG" id="son:SO_3166"/>
<dbReference type="PATRIC" id="fig|211586.12.peg.3072"/>
<dbReference type="eggNOG" id="COG2445">
    <property type="taxonomic scope" value="Bacteria"/>
</dbReference>
<dbReference type="HOGENOM" id="CLU_142825_1_1_6"/>
<dbReference type="OrthoDB" id="9796612at2"/>
<dbReference type="PhylomeDB" id="Q8ECH6"/>
<dbReference type="BioCyc" id="SONE211586:G1GMP-2945-MONOMER"/>
<dbReference type="Proteomes" id="UP000008186">
    <property type="component" value="Chromosome"/>
</dbReference>
<dbReference type="GO" id="GO:0110001">
    <property type="term" value="C:toxin-antitoxin complex"/>
    <property type="evidence" value="ECO:0007669"/>
    <property type="project" value="InterPro"/>
</dbReference>
<dbReference type="GO" id="GO:0004519">
    <property type="term" value="F:endonuclease activity"/>
    <property type="evidence" value="ECO:0007669"/>
    <property type="project" value="UniProtKB-KW"/>
</dbReference>
<dbReference type="GO" id="GO:0000166">
    <property type="term" value="F:nucleotide binding"/>
    <property type="evidence" value="ECO:0007669"/>
    <property type="project" value="UniProtKB-KW"/>
</dbReference>
<dbReference type="GO" id="GO:0004540">
    <property type="term" value="F:RNA nuclease activity"/>
    <property type="evidence" value="ECO:0007669"/>
    <property type="project" value="InterPro"/>
</dbReference>
<dbReference type="Gene3D" id="1.20.120.580">
    <property type="entry name" value="bsu32300-like"/>
    <property type="match status" value="1"/>
</dbReference>
<dbReference type="InterPro" id="IPR008201">
    <property type="entry name" value="HepT-like"/>
</dbReference>
<dbReference type="InterPro" id="IPR037038">
    <property type="entry name" value="HepT-like_sf"/>
</dbReference>
<dbReference type="InterPro" id="IPR052379">
    <property type="entry name" value="Type_VII_TA_RNase"/>
</dbReference>
<dbReference type="NCBIfam" id="NF047751">
    <property type="entry name" value="HepT_toxin"/>
    <property type="match status" value="1"/>
</dbReference>
<dbReference type="PANTHER" id="PTHR33397:SF3">
    <property type="entry name" value="MRNA NUCLEASE HEPT"/>
    <property type="match status" value="1"/>
</dbReference>
<dbReference type="PANTHER" id="PTHR33397">
    <property type="entry name" value="UPF0331 PROTEIN YUTE"/>
    <property type="match status" value="1"/>
</dbReference>
<dbReference type="Pfam" id="PF01934">
    <property type="entry name" value="HepT-like"/>
    <property type="match status" value="1"/>
</dbReference>
<dbReference type="SUPFAM" id="SSF81593">
    <property type="entry name" value="Nucleotidyltransferase substrate binding subunit/domain"/>
    <property type="match status" value="1"/>
</dbReference>
<evidence type="ECO:0000250" key="1">
    <source>
        <dbReference type="UniProtKB" id="A0A0B0QJR1"/>
    </source>
</evidence>
<evidence type="ECO:0000269" key="2">
    <source>
    </source>
</evidence>
<evidence type="ECO:0000269" key="3">
    <source>
    </source>
</evidence>
<evidence type="ECO:0000269" key="4">
    <source>
    </source>
</evidence>
<evidence type="ECO:0000269" key="5">
    <source>
    </source>
</evidence>
<evidence type="ECO:0000303" key="6">
    <source>
    </source>
</evidence>
<evidence type="ECO:0000305" key="7"/>
<evidence type="ECO:0007744" key="8">
    <source>
        <dbReference type="PDB" id="5YEP"/>
    </source>
</evidence>
<evidence type="ECO:0007744" key="9">
    <source>
        <dbReference type="PDB" id="6M6U"/>
    </source>
</evidence>
<evidence type="ECO:0007744" key="10">
    <source>
        <dbReference type="PDB" id="6M6V"/>
    </source>
</evidence>
<evidence type="ECO:0007744" key="11">
    <source>
        <dbReference type="PDB" id="6M6W"/>
    </source>
</evidence>
<evidence type="ECO:0007744" key="12">
    <source>
        <dbReference type="PDB" id="7AER"/>
    </source>
</evidence>
<evidence type="ECO:0007744" key="13">
    <source>
        <dbReference type="PDB" id="7BXO"/>
    </source>
</evidence>
<evidence type="ECO:0007829" key="14">
    <source>
        <dbReference type="PDB" id="6M6U"/>
    </source>
</evidence>
<keyword id="KW-0002">3D-structure</keyword>
<keyword id="KW-0255">Endonuclease</keyword>
<keyword id="KW-0378">Hydrolase</keyword>
<keyword id="KW-0540">Nuclease</keyword>
<keyword id="KW-0547">Nucleotide-binding</keyword>
<keyword id="KW-0597">Phosphoprotein</keyword>
<keyword id="KW-1185">Reference proteome</keyword>
<keyword id="KW-1277">Toxin-antitoxin system</keyword>
<sequence length="133" mass="15313">MNDIIINKIATIKRCIKRIQQVYGDGSQFKQDFTLQDSVILNLQRCCEACIDIANHINRQQQLGIPQSSRDSFTLLAQNNLITQPLSDNLKKMVGLRNIAVHDYQELNLDIVVHVVQHHLEDFEQFIDVIKAE</sequence>